<accession>O74544</accession>
<dbReference type="EC" id="3.6.5.-" evidence="4"/>
<dbReference type="EMBL" id="CU329672">
    <property type="protein sequence ID" value="CAA20709.1"/>
    <property type="molecule type" value="Genomic_DNA"/>
</dbReference>
<dbReference type="PIR" id="T11711">
    <property type="entry name" value="T11711"/>
</dbReference>
<dbReference type="RefSeq" id="NP_588251.1">
    <property type="nucleotide sequence ID" value="NM_001023241.2"/>
</dbReference>
<dbReference type="PDB" id="8FW5">
    <property type="method" value="EM"/>
    <property type="resolution" value="3.08 A"/>
    <property type="chains" value="E=1-314"/>
</dbReference>
<dbReference type="PDBsum" id="8FW5"/>
<dbReference type="EMDB" id="EMD-29497"/>
<dbReference type="SMR" id="O74544"/>
<dbReference type="BioGRID" id="275660">
    <property type="interactions" value="10"/>
</dbReference>
<dbReference type="FunCoup" id="O74544">
    <property type="interactions" value="402"/>
</dbReference>
<dbReference type="STRING" id="284812.O74544"/>
<dbReference type="iPTMnet" id="O74544"/>
<dbReference type="PaxDb" id="4896-SPCC777.05.1"/>
<dbReference type="EnsemblFungi" id="SPCC777.05.1">
    <property type="protein sequence ID" value="SPCC777.05.1:pep"/>
    <property type="gene ID" value="SPCC777.05"/>
</dbReference>
<dbReference type="GeneID" id="2539088"/>
<dbReference type="KEGG" id="spo:2539088"/>
<dbReference type="PomBase" id="SPCC777.05">
    <property type="gene designation" value="gtr2"/>
</dbReference>
<dbReference type="VEuPathDB" id="FungiDB:SPCC777.05"/>
<dbReference type="eggNOG" id="KOG3887">
    <property type="taxonomic scope" value="Eukaryota"/>
</dbReference>
<dbReference type="HOGENOM" id="CLU_047421_1_1_1"/>
<dbReference type="InParanoid" id="O74544"/>
<dbReference type="OMA" id="NCRTFQE"/>
<dbReference type="PhylomeDB" id="O74544"/>
<dbReference type="Reactome" id="R-SPO-165159">
    <property type="pathway name" value="MTOR signalling"/>
</dbReference>
<dbReference type="Reactome" id="R-SPO-9639288">
    <property type="pathway name" value="Amino acids regulate mTORC1"/>
</dbReference>
<dbReference type="PRO" id="PR:O74544"/>
<dbReference type="Proteomes" id="UP000002485">
    <property type="component" value="Chromosome III"/>
</dbReference>
<dbReference type="GO" id="GO:0005829">
    <property type="term" value="C:cytosol"/>
    <property type="evidence" value="ECO:0007005"/>
    <property type="project" value="PomBase"/>
</dbReference>
<dbReference type="GO" id="GO:0000329">
    <property type="term" value="C:fungal-type vacuole membrane"/>
    <property type="evidence" value="ECO:0000314"/>
    <property type="project" value="PomBase"/>
</dbReference>
<dbReference type="GO" id="GO:1990131">
    <property type="term" value="C:Gtr1-Gtr2 GTPase complex"/>
    <property type="evidence" value="ECO:0000316"/>
    <property type="project" value="PomBase"/>
</dbReference>
<dbReference type="GO" id="GO:0005634">
    <property type="term" value="C:nucleus"/>
    <property type="evidence" value="ECO:0007005"/>
    <property type="project" value="PomBase"/>
</dbReference>
<dbReference type="GO" id="GO:0005525">
    <property type="term" value="F:GTP binding"/>
    <property type="evidence" value="ECO:0000318"/>
    <property type="project" value="GO_Central"/>
</dbReference>
<dbReference type="GO" id="GO:0003924">
    <property type="term" value="F:GTPase activity"/>
    <property type="evidence" value="ECO:0000318"/>
    <property type="project" value="GO_Central"/>
</dbReference>
<dbReference type="GO" id="GO:0043539">
    <property type="term" value="F:protein serine/threonine kinase activator activity"/>
    <property type="evidence" value="ECO:0000269"/>
    <property type="project" value="PomBase"/>
</dbReference>
<dbReference type="GO" id="GO:0009267">
    <property type="term" value="P:cellular response to starvation"/>
    <property type="evidence" value="ECO:0000318"/>
    <property type="project" value="GO_Central"/>
</dbReference>
<dbReference type="GO" id="GO:0010507">
    <property type="term" value="P:negative regulation of autophagy"/>
    <property type="evidence" value="ECO:0000318"/>
    <property type="project" value="GO_Central"/>
</dbReference>
<dbReference type="GO" id="GO:0110045">
    <property type="term" value="P:negative regulation of cell cycle switching, mitotic to meiotic cell cycle"/>
    <property type="evidence" value="ECO:0000269"/>
    <property type="project" value="PomBase"/>
</dbReference>
<dbReference type="GO" id="GO:1904263">
    <property type="term" value="P:positive regulation of TORC1 signaling"/>
    <property type="evidence" value="ECO:0000269"/>
    <property type="project" value="PomBase"/>
</dbReference>
<dbReference type="CDD" id="cd11385">
    <property type="entry name" value="RagC_like"/>
    <property type="match status" value="1"/>
</dbReference>
<dbReference type="FunFam" id="3.40.50.300:FF:000643">
    <property type="entry name" value="Small monomeric GTPase (Gtr2)"/>
    <property type="match status" value="1"/>
</dbReference>
<dbReference type="Gene3D" id="3.30.450.190">
    <property type="match status" value="1"/>
</dbReference>
<dbReference type="Gene3D" id="3.40.50.300">
    <property type="entry name" value="P-loop containing nucleotide triphosphate hydrolases"/>
    <property type="match status" value="1"/>
</dbReference>
<dbReference type="InterPro" id="IPR006762">
    <property type="entry name" value="Gtr1_RagA"/>
</dbReference>
<dbReference type="InterPro" id="IPR027417">
    <property type="entry name" value="P-loop_NTPase"/>
</dbReference>
<dbReference type="InterPro" id="IPR039400">
    <property type="entry name" value="RagC/D"/>
</dbReference>
<dbReference type="PANTHER" id="PTHR11259:SF2">
    <property type="entry name" value="GH16429P"/>
    <property type="match status" value="1"/>
</dbReference>
<dbReference type="PANTHER" id="PTHR11259">
    <property type="entry name" value="RAS-RELATED GTP BINDING RAG/GTR YEAST"/>
    <property type="match status" value="1"/>
</dbReference>
<dbReference type="Pfam" id="PF04670">
    <property type="entry name" value="Gtr1_RagA"/>
    <property type="match status" value="1"/>
</dbReference>
<dbReference type="SUPFAM" id="SSF52540">
    <property type="entry name" value="P-loop containing nucleoside triphosphate hydrolases"/>
    <property type="match status" value="1"/>
</dbReference>
<sequence>MKPRKIILMGLRRSGKSSIQKVVFYKMPPNETLFLESTSKLTQDHISSFIDFSVWDFPGQVDVFDAAFDFESIFTQVGALIFVIDAQDDYLDALARLHVTVARVVTINPNICIEVFIHKVDGLSDEFKIDTQRDIQQRTQDELADIGLENVPISFHLTSIFDHSIFEAFSRVIQKLIPQLPTLENLLNIFCSNSLVEKAYLFDVLSKIYVATDSSPVDVQSYEICSDFIDVILDIGSIYGRSSQLKPGHSPEILDETSSVIRLSNDLVLFLREMNQYLALICIVRADNFEKSGLIEYNVQCLQTAIQSIFSPRT</sequence>
<reference key="1">
    <citation type="journal article" date="2002" name="Nature">
        <title>The genome sequence of Schizosaccharomyces pombe.</title>
        <authorList>
            <person name="Wood V."/>
            <person name="Gwilliam R."/>
            <person name="Rajandream M.A."/>
            <person name="Lyne M.H."/>
            <person name="Lyne R."/>
            <person name="Stewart A."/>
            <person name="Sgouros J.G."/>
            <person name="Peat N."/>
            <person name="Hayles J."/>
            <person name="Baker S.G."/>
            <person name="Basham D."/>
            <person name="Bowman S."/>
            <person name="Brooks K."/>
            <person name="Brown D."/>
            <person name="Brown S."/>
            <person name="Chillingworth T."/>
            <person name="Churcher C.M."/>
            <person name="Collins M."/>
            <person name="Connor R."/>
            <person name="Cronin A."/>
            <person name="Davis P."/>
            <person name="Feltwell T."/>
            <person name="Fraser A."/>
            <person name="Gentles S."/>
            <person name="Goble A."/>
            <person name="Hamlin N."/>
            <person name="Harris D.E."/>
            <person name="Hidalgo J."/>
            <person name="Hodgson G."/>
            <person name="Holroyd S."/>
            <person name="Hornsby T."/>
            <person name="Howarth S."/>
            <person name="Huckle E.J."/>
            <person name="Hunt S."/>
            <person name="Jagels K."/>
            <person name="James K.D."/>
            <person name="Jones L."/>
            <person name="Jones M."/>
            <person name="Leather S."/>
            <person name="McDonald S."/>
            <person name="McLean J."/>
            <person name="Mooney P."/>
            <person name="Moule S."/>
            <person name="Mungall K.L."/>
            <person name="Murphy L.D."/>
            <person name="Niblett D."/>
            <person name="Odell C."/>
            <person name="Oliver K."/>
            <person name="O'Neil S."/>
            <person name="Pearson D."/>
            <person name="Quail M.A."/>
            <person name="Rabbinowitsch E."/>
            <person name="Rutherford K.M."/>
            <person name="Rutter S."/>
            <person name="Saunders D."/>
            <person name="Seeger K."/>
            <person name="Sharp S."/>
            <person name="Skelton J."/>
            <person name="Simmonds M.N."/>
            <person name="Squares R."/>
            <person name="Squares S."/>
            <person name="Stevens K."/>
            <person name="Taylor K."/>
            <person name="Taylor R.G."/>
            <person name="Tivey A."/>
            <person name="Walsh S.V."/>
            <person name="Warren T."/>
            <person name="Whitehead S."/>
            <person name="Woodward J.R."/>
            <person name="Volckaert G."/>
            <person name="Aert R."/>
            <person name="Robben J."/>
            <person name="Grymonprez B."/>
            <person name="Weltjens I."/>
            <person name="Vanstreels E."/>
            <person name="Rieger M."/>
            <person name="Schaefer M."/>
            <person name="Mueller-Auer S."/>
            <person name="Gabel C."/>
            <person name="Fuchs M."/>
            <person name="Duesterhoeft A."/>
            <person name="Fritzc C."/>
            <person name="Holzer E."/>
            <person name="Moestl D."/>
            <person name="Hilbert H."/>
            <person name="Borzym K."/>
            <person name="Langer I."/>
            <person name="Beck A."/>
            <person name="Lehrach H."/>
            <person name="Reinhardt R."/>
            <person name="Pohl T.M."/>
            <person name="Eger P."/>
            <person name="Zimmermann W."/>
            <person name="Wedler H."/>
            <person name="Wambutt R."/>
            <person name="Purnelle B."/>
            <person name="Goffeau A."/>
            <person name="Cadieu E."/>
            <person name="Dreano S."/>
            <person name="Gloux S."/>
            <person name="Lelaure V."/>
            <person name="Mottier S."/>
            <person name="Galibert F."/>
            <person name="Aves S.J."/>
            <person name="Xiang Z."/>
            <person name="Hunt C."/>
            <person name="Moore K."/>
            <person name="Hurst S.M."/>
            <person name="Lucas M."/>
            <person name="Rochet M."/>
            <person name="Gaillardin C."/>
            <person name="Tallada V.A."/>
            <person name="Garzon A."/>
            <person name="Thode G."/>
            <person name="Daga R.R."/>
            <person name="Cruzado L."/>
            <person name="Jimenez J."/>
            <person name="Sanchez M."/>
            <person name="del Rey F."/>
            <person name="Benito J."/>
            <person name="Dominguez A."/>
            <person name="Revuelta J.L."/>
            <person name="Moreno S."/>
            <person name="Armstrong J."/>
            <person name="Forsburg S.L."/>
            <person name="Cerutti L."/>
            <person name="Lowe T."/>
            <person name="McCombie W.R."/>
            <person name="Paulsen I."/>
            <person name="Potashkin J."/>
            <person name="Shpakovski G.V."/>
            <person name="Ussery D."/>
            <person name="Barrell B.G."/>
            <person name="Nurse P."/>
        </authorList>
    </citation>
    <scope>NUCLEOTIDE SEQUENCE [LARGE SCALE GENOMIC DNA]</scope>
    <source>
        <strain>972 / ATCC 24843</strain>
    </source>
</reference>
<reference key="2">
    <citation type="journal article" date="2006" name="Nat. Biotechnol.">
        <title>ORFeome cloning and global analysis of protein localization in the fission yeast Schizosaccharomyces pombe.</title>
        <authorList>
            <person name="Matsuyama A."/>
            <person name="Arai R."/>
            <person name="Yashiroda Y."/>
            <person name="Shirai A."/>
            <person name="Kamata A."/>
            <person name="Sekido S."/>
            <person name="Kobayashi Y."/>
            <person name="Hashimoto A."/>
            <person name="Hamamoto M."/>
            <person name="Hiraoka Y."/>
            <person name="Horinouchi S."/>
            <person name="Yoshida M."/>
        </authorList>
    </citation>
    <scope>SUBCELLULAR LOCATION [LARGE SCALE ANALYSIS]</scope>
</reference>
<name>RAGCD_SCHPO</name>
<comment type="function">
    <text evidence="1 2">GTPase involved in activation of the TORC1 signaling pathway, which promotes growth and represses autophagy in nutrient-rich conditions (By similarity). Also required for TORC1 inactivation during nitrogen starvation (By similarity).</text>
</comment>
<comment type="catalytic activity">
    <reaction evidence="3">
        <text>GTP + H2O = GDP + phosphate + H(+)</text>
        <dbReference type="Rhea" id="RHEA:19669"/>
        <dbReference type="ChEBI" id="CHEBI:15377"/>
        <dbReference type="ChEBI" id="CHEBI:15378"/>
        <dbReference type="ChEBI" id="CHEBI:37565"/>
        <dbReference type="ChEBI" id="CHEBI:43474"/>
        <dbReference type="ChEBI" id="CHEBI:58189"/>
    </reaction>
    <physiologicalReaction direction="left-to-right" evidence="3">
        <dbReference type="Rhea" id="RHEA:19670"/>
    </physiologicalReaction>
</comment>
<comment type="subcellular location">
    <subcellularLocation>
        <location evidence="2">Vacuole membrane</location>
        <topology evidence="6">Peripheral membrane protein</topology>
    </subcellularLocation>
    <subcellularLocation>
        <location evidence="5">Cytoplasm</location>
    </subcellularLocation>
    <subcellularLocation>
        <location evidence="5">Nucleus</location>
    </subcellularLocation>
</comment>
<comment type="similarity">
    <text evidence="6">Belongs to the GTR/RAG GTP-binding protein family.</text>
</comment>
<evidence type="ECO:0000250" key="1">
    <source>
        <dbReference type="UniProtKB" id="A0A6A5PVF7"/>
    </source>
</evidence>
<evidence type="ECO:0000250" key="2">
    <source>
        <dbReference type="UniProtKB" id="P53290"/>
    </source>
</evidence>
<evidence type="ECO:0000250" key="3">
    <source>
        <dbReference type="UniProtKB" id="Q7L523"/>
    </source>
</evidence>
<evidence type="ECO:0000250" key="4">
    <source>
        <dbReference type="UniProtKB" id="Q9HB90"/>
    </source>
</evidence>
<evidence type="ECO:0000269" key="5">
    <source>
    </source>
</evidence>
<evidence type="ECO:0000305" key="6"/>
<evidence type="ECO:0007829" key="7">
    <source>
        <dbReference type="PDB" id="8FW5"/>
    </source>
</evidence>
<organism>
    <name type="scientific">Schizosaccharomyces pombe (strain 972 / ATCC 24843)</name>
    <name type="common">Fission yeast</name>
    <dbReference type="NCBI Taxonomy" id="284812"/>
    <lineage>
        <taxon>Eukaryota</taxon>
        <taxon>Fungi</taxon>
        <taxon>Dikarya</taxon>
        <taxon>Ascomycota</taxon>
        <taxon>Taphrinomycotina</taxon>
        <taxon>Schizosaccharomycetes</taxon>
        <taxon>Schizosaccharomycetales</taxon>
        <taxon>Schizosaccharomycetaceae</taxon>
        <taxon>Schizosaccharomyces</taxon>
    </lineage>
</organism>
<feature type="chain" id="PRO_0000372338" description="GTP-binding protein gtr2">
    <location>
        <begin position="1"/>
        <end position="314"/>
    </location>
</feature>
<feature type="binding site" evidence="2">
    <location>
        <position position="17"/>
    </location>
    <ligand>
        <name>GTP</name>
        <dbReference type="ChEBI" id="CHEBI:37565"/>
    </ligand>
</feature>
<feature type="binding site" evidence="2">
    <location>
        <position position="18"/>
    </location>
    <ligand>
        <name>GTP</name>
        <dbReference type="ChEBI" id="CHEBI:37565"/>
    </ligand>
</feature>
<feature type="binding site" evidence="2">
    <location>
        <position position="37"/>
    </location>
    <ligand>
        <name>GTP</name>
        <dbReference type="ChEBI" id="CHEBI:37565"/>
    </ligand>
</feature>
<feature type="binding site" evidence="2">
    <location>
        <position position="118"/>
    </location>
    <ligand>
        <name>GTP</name>
        <dbReference type="ChEBI" id="CHEBI:37565"/>
    </ligand>
</feature>
<feature type="binding site" evidence="2">
    <location>
        <position position="121"/>
    </location>
    <ligand>
        <name>GTP</name>
        <dbReference type="ChEBI" id="CHEBI:37565"/>
    </ligand>
</feature>
<feature type="strand" evidence="7">
    <location>
        <begin position="5"/>
        <end position="10"/>
    </location>
</feature>
<feature type="helix" evidence="7">
    <location>
        <begin position="16"/>
        <end position="22"/>
    </location>
</feature>
<feature type="turn" evidence="7">
    <location>
        <begin position="23"/>
        <end position="25"/>
    </location>
</feature>
<feature type="strand" evidence="7">
    <location>
        <begin position="54"/>
        <end position="56"/>
    </location>
</feature>
<feature type="strand" evidence="7">
    <location>
        <begin position="59"/>
        <end position="61"/>
    </location>
</feature>
<feature type="helix" evidence="7">
    <location>
        <begin position="70"/>
        <end position="75"/>
    </location>
</feature>
<feature type="strand" evidence="7">
    <location>
        <begin position="76"/>
        <end position="88"/>
    </location>
</feature>
<feature type="helix" evidence="7">
    <location>
        <begin position="91"/>
        <end position="107"/>
    </location>
</feature>
<feature type="strand" evidence="7">
    <location>
        <begin position="112"/>
        <end position="118"/>
    </location>
</feature>
<feature type="strand" evidence="7">
    <location>
        <begin position="121"/>
        <end position="123"/>
    </location>
</feature>
<feature type="helix" evidence="7">
    <location>
        <begin position="125"/>
        <end position="146"/>
    </location>
</feature>
<feature type="strand" evidence="7">
    <location>
        <begin position="153"/>
        <end position="157"/>
    </location>
</feature>
<feature type="helix" evidence="7">
    <location>
        <begin position="164"/>
        <end position="176"/>
    </location>
</feature>
<feature type="helix" evidence="7">
    <location>
        <begin position="180"/>
        <end position="194"/>
    </location>
</feature>
<feature type="strand" evidence="7">
    <location>
        <begin position="197"/>
        <end position="203"/>
    </location>
</feature>
<feature type="turn" evidence="7">
    <location>
        <begin position="204"/>
        <end position="207"/>
    </location>
</feature>
<feature type="strand" evidence="7">
    <location>
        <begin position="208"/>
        <end position="212"/>
    </location>
</feature>
<feature type="helix" evidence="7">
    <location>
        <begin position="219"/>
        <end position="239"/>
    </location>
</feature>
<feature type="strand" evidence="7">
    <location>
        <begin position="242"/>
        <end position="245"/>
    </location>
</feature>
<feature type="strand" evidence="7">
    <location>
        <begin position="258"/>
        <end position="263"/>
    </location>
</feature>
<feature type="strand" evidence="7">
    <location>
        <begin position="266"/>
        <end position="273"/>
    </location>
</feature>
<feature type="strand" evidence="7">
    <location>
        <begin position="275"/>
        <end position="285"/>
    </location>
</feature>
<feature type="turn" evidence="7">
    <location>
        <begin position="286"/>
        <end position="291"/>
    </location>
</feature>
<feature type="helix" evidence="7">
    <location>
        <begin position="292"/>
        <end position="309"/>
    </location>
</feature>
<proteinExistence type="evidence at protein level"/>
<keyword id="KW-0002">3D-structure</keyword>
<keyword id="KW-0963">Cytoplasm</keyword>
<keyword id="KW-0342">GTP-binding</keyword>
<keyword id="KW-0378">Hydrolase</keyword>
<keyword id="KW-0472">Membrane</keyword>
<keyword id="KW-0547">Nucleotide-binding</keyword>
<keyword id="KW-0539">Nucleus</keyword>
<keyword id="KW-1185">Reference proteome</keyword>
<keyword id="KW-0926">Vacuole</keyword>
<gene>
    <name type="primary">gtr2</name>
    <name type="ORF">SPCC777.05</name>
</gene>
<protein>
    <recommendedName>
        <fullName>GTP-binding protein gtr2</fullName>
        <ecNumber evidence="4">3.6.5.-</ecNumber>
    </recommendedName>
</protein>